<comment type="function">
    <text evidence="1">One of the primary rRNA binding proteins, this protein initially binds near the 5'-end of the 23S rRNA. It is important during the early stages of 50S assembly. It makes multiple contacts with different domains of the 23S rRNA in the assembled 50S subunit and ribosome.</text>
</comment>
<comment type="function">
    <text evidence="1">Forms part of the polypeptide exit tunnel.</text>
</comment>
<comment type="subunit">
    <text evidence="1">Part of the 50S ribosomal subunit.</text>
</comment>
<comment type="similarity">
    <text evidence="1">Belongs to the universal ribosomal protein uL4 family.</text>
</comment>
<accession>B7UK43</accession>
<feature type="chain" id="PRO_1000166004" description="Large ribosomal subunit protein uL4">
    <location>
        <begin position="1"/>
        <end position="201"/>
    </location>
</feature>
<feature type="region of interest" description="Disordered" evidence="2">
    <location>
        <begin position="44"/>
        <end position="71"/>
    </location>
</feature>
<reference key="1">
    <citation type="journal article" date="2009" name="J. Bacteriol.">
        <title>Complete genome sequence and comparative genome analysis of enteropathogenic Escherichia coli O127:H6 strain E2348/69.</title>
        <authorList>
            <person name="Iguchi A."/>
            <person name="Thomson N.R."/>
            <person name="Ogura Y."/>
            <person name="Saunders D."/>
            <person name="Ooka T."/>
            <person name="Henderson I.R."/>
            <person name="Harris D."/>
            <person name="Asadulghani M."/>
            <person name="Kurokawa K."/>
            <person name="Dean P."/>
            <person name="Kenny B."/>
            <person name="Quail M.A."/>
            <person name="Thurston S."/>
            <person name="Dougan G."/>
            <person name="Hayashi T."/>
            <person name="Parkhill J."/>
            <person name="Frankel G."/>
        </authorList>
    </citation>
    <scope>NUCLEOTIDE SEQUENCE [LARGE SCALE GENOMIC DNA]</scope>
    <source>
        <strain>E2348/69 / EPEC</strain>
    </source>
</reference>
<organism>
    <name type="scientific">Escherichia coli O127:H6 (strain E2348/69 / EPEC)</name>
    <dbReference type="NCBI Taxonomy" id="574521"/>
    <lineage>
        <taxon>Bacteria</taxon>
        <taxon>Pseudomonadati</taxon>
        <taxon>Pseudomonadota</taxon>
        <taxon>Gammaproteobacteria</taxon>
        <taxon>Enterobacterales</taxon>
        <taxon>Enterobacteriaceae</taxon>
        <taxon>Escherichia</taxon>
    </lineage>
</organism>
<gene>
    <name evidence="1" type="primary">rplD</name>
    <name type="ordered locus">E2348C_3582</name>
</gene>
<name>RL4_ECO27</name>
<evidence type="ECO:0000255" key="1">
    <source>
        <dbReference type="HAMAP-Rule" id="MF_01328"/>
    </source>
</evidence>
<evidence type="ECO:0000256" key="2">
    <source>
        <dbReference type="SAM" id="MobiDB-lite"/>
    </source>
</evidence>
<evidence type="ECO:0000305" key="3"/>
<keyword id="KW-1185">Reference proteome</keyword>
<keyword id="KW-0687">Ribonucleoprotein</keyword>
<keyword id="KW-0689">Ribosomal protein</keyword>
<keyword id="KW-0694">RNA-binding</keyword>
<keyword id="KW-0699">rRNA-binding</keyword>
<dbReference type="EMBL" id="FM180568">
    <property type="protein sequence ID" value="CAS11130.1"/>
    <property type="molecule type" value="Genomic_DNA"/>
</dbReference>
<dbReference type="RefSeq" id="WP_000424395.1">
    <property type="nucleotide sequence ID" value="NC_011601.1"/>
</dbReference>
<dbReference type="SMR" id="B7UK43"/>
<dbReference type="GeneID" id="97442859"/>
<dbReference type="KEGG" id="ecg:E2348C_3582"/>
<dbReference type="HOGENOM" id="CLU_041575_5_2_6"/>
<dbReference type="Proteomes" id="UP000008205">
    <property type="component" value="Chromosome"/>
</dbReference>
<dbReference type="GO" id="GO:1990904">
    <property type="term" value="C:ribonucleoprotein complex"/>
    <property type="evidence" value="ECO:0007669"/>
    <property type="project" value="UniProtKB-KW"/>
</dbReference>
<dbReference type="GO" id="GO:0005840">
    <property type="term" value="C:ribosome"/>
    <property type="evidence" value="ECO:0007669"/>
    <property type="project" value="UniProtKB-KW"/>
</dbReference>
<dbReference type="GO" id="GO:0019843">
    <property type="term" value="F:rRNA binding"/>
    <property type="evidence" value="ECO:0007669"/>
    <property type="project" value="UniProtKB-UniRule"/>
</dbReference>
<dbReference type="GO" id="GO:0003735">
    <property type="term" value="F:structural constituent of ribosome"/>
    <property type="evidence" value="ECO:0007669"/>
    <property type="project" value="InterPro"/>
</dbReference>
<dbReference type="GO" id="GO:0006412">
    <property type="term" value="P:translation"/>
    <property type="evidence" value="ECO:0007669"/>
    <property type="project" value="UniProtKB-UniRule"/>
</dbReference>
<dbReference type="FunFam" id="3.40.1370.10:FF:000001">
    <property type="entry name" value="50S ribosomal protein L4"/>
    <property type="match status" value="1"/>
</dbReference>
<dbReference type="Gene3D" id="3.40.1370.10">
    <property type="match status" value="1"/>
</dbReference>
<dbReference type="HAMAP" id="MF_01328_B">
    <property type="entry name" value="Ribosomal_uL4_B"/>
    <property type="match status" value="1"/>
</dbReference>
<dbReference type="InterPro" id="IPR002136">
    <property type="entry name" value="Ribosomal_uL4"/>
</dbReference>
<dbReference type="InterPro" id="IPR013005">
    <property type="entry name" value="Ribosomal_uL4-like"/>
</dbReference>
<dbReference type="InterPro" id="IPR023574">
    <property type="entry name" value="Ribosomal_uL4_dom_sf"/>
</dbReference>
<dbReference type="NCBIfam" id="TIGR03953">
    <property type="entry name" value="rplD_bact"/>
    <property type="match status" value="1"/>
</dbReference>
<dbReference type="PANTHER" id="PTHR10746">
    <property type="entry name" value="50S RIBOSOMAL PROTEIN L4"/>
    <property type="match status" value="1"/>
</dbReference>
<dbReference type="PANTHER" id="PTHR10746:SF6">
    <property type="entry name" value="LARGE RIBOSOMAL SUBUNIT PROTEIN UL4M"/>
    <property type="match status" value="1"/>
</dbReference>
<dbReference type="Pfam" id="PF00573">
    <property type="entry name" value="Ribosomal_L4"/>
    <property type="match status" value="1"/>
</dbReference>
<dbReference type="SUPFAM" id="SSF52166">
    <property type="entry name" value="Ribosomal protein L4"/>
    <property type="match status" value="1"/>
</dbReference>
<protein>
    <recommendedName>
        <fullName evidence="1">Large ribosomal subunit protein uL4</fullName>
    </recommendedName>
    <alternativeName>
        <fullName evidence="3">50S ribosomal protein L4</fullName>
    </alternativeName>
</protein>
<sequence length="201" mass="22087">MELVLKDAQSALTVSETTFGRDFNEALVHQVVVAYAAGARQGTRAQKTRAEVTGSGKKPWRQKGTGRARSGSIKSPIWRSGGVTFAARPQDHSQKVNKKMYRGALKSILSELVRQDRLIVVEKFSVEAPKTKLLAQKLKDMALEDVLIITGELDENLFLAARNLHKVDVRDATGIDPVSLIAFDKVVMTADAVKQVEEMLA</sequence>
<proteinExistence type="inferred from homology"/>